<accession>A9L5G0</accession>
<reference key="1">
    <citation type="submission" date="2007-11" db="EMBL/GenBank/DDBJ databases">
        <title>Complete sequence of chromosome of Shewanella baltica OS195.</title>
        <authorList>
            <consortium name="US DOE Joint Genome Institute"/>
            <person name="Copeland A."/>
            <person name="Lucas S."/>
            <person name="Lapidus A."/>
            <person name="Barry K."/>
            <person name="Glavina del Rio T."/>
            <person name="Dalin E."/>
            <person name="Tice H."/>
            <person name="Pitluck S."/>
            <person name="Chain P."/>
            <person name="Malfatti S."/>
            <person name="Shin M."/>
            <person name="Vergez L."/>
            <person name="Schmutz J."/>
            <person name="Larimer F."/>
            <person name="Land M."/>
            <person name="Hauser L."/>
            <person name="Kyrpides N."/>
            <person name="Kim E."/>
            <person name="Brettar I."/>
            <person name="Rodrigues J."/>
            <person name="Konstantinidis K."/>
            <person name="Klappenbach J."/>
            <person name="Hofle M."/>
            <person name="Tiedje J."/>
            <person name="Richardson P."/>
        </authorList>
    </citation>
    <scope>NUCLEOTIDE SEQUENCE [LARGE SCALE GENOMIC DNA]</scope>
    <source>
        <strain>OS195</strain>
    </source>
</reference>
<sequence>MSENRIRIATRKSPLAMWQAEFVKAELERIHPGIVVELLPMSTKGDVILDTPLAKVGGKGLFVKELEVAMLDDLADIAVHSMKDVPVDFPEGLGLEVICEREDPRDAFVSNLYKSISELPLGATVGTSSLRRQCQIRASRPDLIIKDLRGNVGTRLAKLDNGEYDAIILAAAGLIRLKLSERIASFISAEESLPANGQGAVGIECRINDERVKALLAPLEHLETRYRVLAERAMNTRLEGGCQVPIGAFAEIDGDEMTLRGLVGNPDGSEIIEGVITGPKTDATQLGVALAEELLSKGAKSILDAVYAKA</sequence>
<feature type="chain" id="PRO_1000078621" description="Porphobilinogen deaminase">
    <location>
        <begin position="1"/>
        <end position="310"/>
    </location>
</feature>
<feature type="modified residue" description="S-(dipyrrolylmethanemethyl)cysteine" evidence="1">
    <location>
        <position position="242"/>
    </location>
</feature>
<comment type="function">
    <text evidence="1">Tetrapolymerization of the monopyrrole PBG into the hydroxymethylbilane pre-uroporphyrinogen in several discrete steps.</text>
</comment>
<comment type="catalytic activity">
    <reaction evidence="1">
        <text>4 porphobilinogen + H2O = hydroxymethylbilane + 4 NH4(+)</text>
        <dbReference type="Rhea" id="RHEA:13185"/>
        <dbReference type="ChEBI" id="CHEBI:15377"/>
        <dbReference type="ChEBI" id="CHEBI:28938"/>
        <dbReference type="ChEBI" id="CHEBI:57845"/>
        <dbReference type="ChEBI" id="CHEBI:58126"/>
        <dbReference type="EC" id="2.5.1.61"/>
    </reaction>
</comment>
<comment type="cofactor">
    <cofactor evidence="1">
        <name>dipyrromethane</name>
        <dbReference type="ChEBI" id="CHEBI:60342"/>
    </cofactor>
    <text evidence="1">Binds 1 dipyrromethane group covalently.</text>
</comment>
<comment type="pathway">
    <text evidence="1">Porphyrin-containing compound metabolism; protoporphyrin-IX biosynthesis; coproporphyrinogen-III from 5-aminolevulinate: step 2/4.</text>
</comment>
<comment type="subunit">
    <text evidence="1">Monomer.</text>
</comment>
<comment type="miscellaneous">
    <text evidence="1">The porphobilinogen subunits are added to the dipyrromethane group.</text>
</comment>
<comment type="similarity">
    <text evidence="1">Belongs to the HMBS family.</text>
</comment>
<protein>
    <recommendedName>
        <fullName evidence="1">Porphobilinogen deaminase</fullName>
        <shortName evidence="1">PBG</shortName>
        <ecNumber evidence="1">2.5.1.61</ecNumber>
    </recommendedName>
    <alternativeName>
        <fullName evidence="1">Hydroxymethylbilane synthase</fullName>
        <shortName evidence="1">HMBS</shortName>
    </alternativeName>
    <alternativeName>
        <fullName evidence="1">Pre-uroporphyrinogen synthase</fullName>
    </alternativeName>
</protein>
<evidence type="ECO:0000255" key="1">
    <source>
        <dbReference type="HAMAP-Rule" id="MF_00260"/>
    </source>
</evidence>
<dbReference type="EC" id="2.5.1.61" evidence="1"/>
<dbReference type="EMBL" id="CP000891">
    <property type="protein sequence ID" value="ABX51254.1"/>
    <property type="molecule type" value="Genomic_DNA"/>
</dbReference>
<dbReference type="RefSeq" id="WP_012197715.1">
    <property type="nucleotide sequence ID" value="NC_009997.1"/>
</dbReference>
<dbReference type="SMR" id="A9L5G0"/>
<dbReference type="GeneID" id="11774087"/>
<dbReference type="KEGG" id="sbn:Sbal195_4094"/>
<dbReference type="HOGENOM" id="CLU_019704_0_2_6"/>
<dbReference type="UniPathway" id="UPA00251">
    <property type="reaction ID" value="UER00319"/>
</dbReference>
<dbReference type="Proteomes" id="UP000000770">
    <property type="component" value="Chromosome"/>
</dbReference>
<dbReference type="GO" id="GO:0005737">
    <property type="term" value="C:cytoplasm"/>
    <property type="evidence" value="ECO:0007669"/>
    <property type="project" value="TreeGrafter"/>
</dbReference>
<dbReference type="GO" id="GO:0004418">
    <property type="term" value="F:hydroxymethylbilane synthase activity"/>
    <property type="evidence" value="ECO:0007669"/>
    <property type="project" value="UniProtKB-UniRule"/>
</dbReference>
<dbReference type="GO" id="GO:0006782">
    <property type="term" value="P:protoporphyrinogen IX biosynthetic process"/>
    <property type="evidence" value="ECO:0007669"/>
    <property type="project" value="UniProtKB-UniRule"/>
</dbReference>
<dbReference type="CDD" id="cd13646">
    <property type="entry name" value="PBP2_EcHMBS_like"/>
    <property type="match status" value="1"/>
</dbReference>
<dbReference type="FunFam" id="3.30.160.40:FF:000002">
    <property type="entry name" value="Porphobilinogen deaminase"/>
    <property type="match status" value="1"/>
</dbReference>
<dbReference type="FunFam" id="3.40.190.10:FF:000004">
    <property type="entry name" value="Porphobilinogen deaminase"/>
    <property type="match status" value="1"/>
</dbReference>
<dbReference type="FunFam" id="3.40.190.10:FF:000005">
    <property type="entry name" value="Porphobilinogen deaminase"/>
    <property type="match status" value="1"/>
</dbReference>
<dbReference type="Gene3D" id="3.40.190.10">
    <property type="entry name" value="Periplasmic binding protein-like II"/>
    <property type="match status" value="2"/>
</dbReference>
<dbReference type="Gene3D" id="3.30.160.40">
    <property type="entry name" value="Porphobilinogen deaminase, C-terminal domain"/>
    <property type="match status" value="1"/>
</dbReference>
<dbReference type="HAMAP" id="MF_00260">
    <property type="entry name" value="Porphobil_deam"/>
    <property type="match status" value="1"/>
</dbReference>
<dbReference type="InterPro" id="IPR000860">
    <property type="entry name" value="HemC"/>
</dbReference>
<dbReference type="InterPro" id="IPR022419">
    <property type="entry name" value="Porphobilin_deaminase_cofac_BS"/>
</dbReference>
<dbReference type="InterPro" id="IPR022417">
    <property type="entry name" value="Porphobilin_deaminase_N"/>
</dbReference>
<dbReference type="InterPro" id="IPR022418">
    <property type="entry name" value="Porphobilinogen_deaminase_C"/>
</dbReference>
<dbReference type="InterPro" id="IPR036803">
    <property type="entry name" value="Porphobilinogen_deaminase_C_sf"/>
</dbReference>
<dbReference type="NCBIfam" id="TIGR00212">
    <property type="entry name" value="hemC"/>
    <property type="match status" value="1"/>
</dbReference>
<dbReference type="PANTHER" id="PTHR11557">
    <property type="entry name" value="PORPHOBILINOGEN DEAMINASE"/>
    <property type="match status" value="1"/>
</dbReference>
<dbReference type="PANTHER" id="PTHR11557:SF0">
    <property type="entry name" value="PORPHOBILINOGEN DEAMINASE"/>
    <property type="match status" value="1"/>
</dbReference>
<dbReference type="Pfam" id="PF01379">
    <property type="entry name" value="Porphobil_deam"/>
    <property type="match status" value="1"/>
</dbReference>
<dbReference type="Pfam" id="PF03900">
    <property type="entry name" value="Porphobil_deamC"/>
    <property type="match status" value="1"/>
</dbReference>
<dbReference type="PIRSF" id="PIRSF001438">
    <property type="entry name" value="4pyrrol_synth_OHMeBilane_synth"/>
    <property type="match status" value="1"/>
</dbReference>
<dbReference type="PRINTS" id="PR00151">
    <property type="entry name" value="PORPHBDMNASE"/>
</dbReference>
<dbReference type="SUPFAM" id="SSF53850">
    <property type="entry name" value="Periplasmic binding protein-like II"/>
    <property type="match status" value="1"/>
</dbReference>
<dbReference type="SUPFAM" id="SSF54782">
    <property type="entry name" value="Porphobilinogen deaminase (hydroxymethylbilane synthase), C-terminal domain"/>
    <property type="match status" value="1"/>
</dbReference>
<dbReference type="PROSITE" id="PS00533">
    <property type="entry name" value="PORPHOBILINOGEN_DEAM"/>
    <property type="match status" value="1"/>
</dbReference>
<name>HEM3_SHEB9</name>
<proteinExistence type="inferred from homology"/>
<keyword id="KW-0627">Porphyrin biosynthesis</keyword>
<keyword id="KW-0808">Transferase</keyword>
<organism>
    <name type="scientific">Shewanella baltica (strain OS195)</name>
    <dbReference type="NCBI Taxonomy" id="399599"/>
    <lineage>
        <taxon>Bacteria</taxon>
        <taxon>Pseudomonadati</taxon>
        <taxon>Pseudomonadota</taxon>
        <taxon>Gammaproteobacteria</taxon>
        <taxon>Alteromonadales</taxon>
        <taxon>Shewanellaceae</taxon>
        <taxon>Shewanella</taxon>
    </lineage>
</organism>
<gene>
    <name evidence="1" type="primary">hemC</name>
    <name type="ordered locus">Sbal195_4094</name>
</gene>